<comment type="function">
    <text evidence="1">Catalyzes the attachment of tyrosine to tRNA(Tyr) in a two-step reaction: tyrosine is first activated by ATP to form Tyr-AMP and then transferred to the acceptor end of tRNA(Tyr).</text>
</comment>
<comment type="catalytic activity">
    <reaction evidence="1">
        <text>tRNA(Tyr) + L-tyrosine + ATP = L-tyrosyl-tRNA(Tyr) + AMP + diphosphate + H(+)</text>
        <dbReference type="Rhea" id="RHEA:10220"/>
        <dbReference type="Rhea" id="RHEA-COMP:9706"/>
        <dbReference type="Rhea" id="RHEA-COMP:9707"/>
        <dbReference type="ChEBI" id="CHEBI:15378"/>
        <dbReference type="ChEBI" id="CHEBI:30616"/>
        <dbReference type="ChEBI" id="CHEBI:33019"/>
        <dbReference type="ChEBI" id="CHEBI:58315"/>
        <dbReference type="ChEBI" id="CHEBI:78442"/>
        <dbReference type="ChEBI" id="CHEBI:78536"/>
        <dbReference type="ChEBI" id="CHEBI:456215"/>
        <dbReference type="EC" id="6.1.1.1"/>
    </reaction>
</comment>
<comment type="subunit">
    <text evidence="1">Homodimer.</text>
</comment>
<comment type="subcellular location">
    <subcellularLocation>
        <location evidence="1">Cytoplasm</location>
    </subcellularLocation>
</comment>
<comment type="similarity">
    <text evidence="1">Belongs to the class-I aminoacyl-tRNA synthetase family. TyrS type 1 subfamily.</text>
</comment>
<dbReference type="EC" id="6.1.1.1" evidence="1"/>
<dbReference type="EMBL" id="AE001273">
    <property type="protein sequence ID" value="AAC67653.1"/>
    <property type="molecule type" value="Genomic_DNA"/>
</dbReference>
<dbReference type="PIR" id="H71560">
    <property type="entry name" value="H71560"/>
</dbReference>
<dbReference type="RefSeq" id="NP_219565.1">
    <property type="nucleotide sequence ID" value="NC_000117.1"/>
</dbReference>
<dbReference type="RefSeq" id="WP_009873530.1">
    <property type="nucleotide sequence ID" value="NC_000117.1"/>
</dbReference>
<dbReference type="SMR" id="O84065"/>
<dbReference type="FunCoup" id="O84065">
    <property type="interactions" value="236"/>
</dbReference>
<dbReference type="STRING" id="272561.CT_062"/>
<dbReference type="EnsemblBacteria" id="AAC67653">
    <property type="protein sequence ID" value="AAC67653"/>
    <property type="gene ID" value="CT_062"/>
</dbReference>
<dbReference type="GeneID" id="884058"/>
<dbReference type="KEGG" id="ctr:CT_062"/>
<dbReference type="PATRIC" id="fig|272561.5.peg.71"/>
<dbReference type="HOGENOM" id="CLU_024003_0_3_0"/>
<dbReference type="InParanoid" id="O84065"/>
<dbReference type="OrthoDB" id="9804243at2"/>
<dbReference type="Proteomes" id="UP000000431">
    <property type="component" value="Chromosome"/>
</dbReference>
<dbReference type="GO" id="GO:0005829">
    <property type="term" value="C:cytosol"/>
    <property type="evidence" value="ECO:0000318"/>
    <property type="project" value="GO_Central"/>
</dbReference>
<dbReference type="GO" id="GO:0005524">
    <property type="term" value="F:ATP binding"/>
    <property type="evidence" value="ECO:0007669"/>
    <property type="project" value="UniProtKB-UniRule"/>
</dbReference>
<dbReference type="GO" id="GO:0003723">
    <property type="term" value="F:RNA binding"/>
    <property type="evidence" value="ECO:0007669"/>
    <property type="project" value="UniProtKB-KW"/>
</dbReference>
<dbReference type="GO" id="GO:0004831">
    <property type="term" value="F:tyrosine-tRNA ligase activity"/>
    <property type="evidence" value="ECO:0000318"/>
    <property type="project" value="GO_Central"/>
</dbReference>
<dbReference type="GO" id="GO:0043039">
    <property type="term" value="P:tRNA aminoacylation"/>
    <property type="evidence" value="ECO:0000318"/>
    <property type="project" value="GO_Central"/>
</dbReference>
<dbReference type="GO" id="GO:0006437">
    <property type="term" value="P:tyrosyl-tRNA aminoacylation"/>
    <property type="evidence" value="ECO:0007669"/>
    <property type="project" value="UniProtKB-UniRule"/>
</dbReference>
<dbReference type="CDD" id="cd00165">
    <property type="entry name" value="S4"/>
    <property type="match status" value="1"/>
</dbReference>
<dbReference type="CDD" id="cd00805">
    <property type="entry name" value="TyrRS_core"/>
    <property type="match status" value="1"/>
</dbReference>
<dbReference type="FunFam" id="3.40.50.620:FF:000287">
    <property type="entry name" value="Tyrosine--tRNA ligase"/>
    <property type="match status" value="1"/>
</dbReference>
<dbReference type="Gene3D" id="3.40.50.620">
    <property type="entry name" value="HUPs"/>
    <property type="match status" value="1"/>
</dbReference>
<dbReference type="Gene3D" id="3.10.290.10">
    <property type="entry name" value="RNA-binding S4 domain"/>
    <property type="match status" value="1"/>
</dbReference>
<dbReference type="Gene3D" id="1.10.240.10">
    <property type="entry name" value="Tyrosyl-Transfer RNA Synthetase"/>
    <property type="match status" value="1"/>
</dbReference>
<dbReference type="HAMAP" id="MF_02006">
    <property type="entry name" value="Tyr_tRNA_synth_type1"/>
    <property type="match status" value="1"/>
</dbReference>
<dbReference type="InterPro" id="IPR002305">
    <property type="entry name" value="aa-tRNA-synth_Ic"/>
</dbReference>
<dbReference type="InterPro" id="IPR014729">
    <property type="entry name" value="Rossmann-like_a/b/a_fold"/>
</dbReference>
<dbReference type="InterPro" id="IPR002942">
    <property type="entry name" value="S4_RNA-bd"/>
</dbReference>
<dbReference type="InterPro" id="IPR036986">
    <property type="entry name" value="S4_RNA-bd_sf"/>
</dbReference>
<dbReference type="InterPro" id="IPR002307">
    <property type="entry name" value="Tyr-tRNA-ligase"/>
</dbReference>
<dbReference type="InterPro" id="IPR024088">
    <property type="entry name" value="Tyr-tRNA-ligase_bac-type"/>
</dbReference>
<dbReference type="InterPro" id="IPR024107">
    <property type="entry name" value="Tyr-tRNA-ligase_bac_1"/>
</dbReference>
<dbReference type="NCBIfam" id="TIGR00234">
    <property type="entry name" value="tyrS"/>
    <property type="match status" value="1"/>
</dbReference>
<dbReference type="PANTHER" id="PTHR11766:SF0">
    <property type="entry name" value="TYROSINE--TRNA LIGASE, MITOCHONDRIAL"/>
    <property type="match status" value="1"/>
</dbReference>
<dbReference type="PANTHER" id="PTHR11766">
    <property type="entry name" value="TYROSYL-TRNA SYNTHETASE"/>
    <property type="match status" value="1"/>
</dbReference>
<dbReference type="Pfam" id="PF01479">
    <property type="entry name" value="S4"/>
    <property type="match status" value="1"/>
</dbReference>
<dbReference type="Pfam" id="PF00579">
    <property type="entry name" value="tRNA-synt_1b"/>
    <property type="match status" value="1"/>
</dbReference>
<dbReference type="PRINTS" id="PR01040">
    <property type="entry name" value="TRNASYNTHTYR"/>
</dbReference>
<dbReference type="SMART" id="SM00363">
    <property type="entry name" value="S4"/>
    <property type="match status" value="1"/>
</dbReference>
<dbReference type="SUPFAM" id="SSF55174">
    <property type="entry name" value="Alpha-L RNA-binding motif"/>
    <property type="match status" value="1"/>
</dbReference>
<dbReference type="SUPFAM" id="SSF52374">
    <property type="entry name" value="Nucleotidylyl transferase"/>
    <property type="match status" value="1"/>
</dbReference>
<dbReference type="PROSITE" id="PS50889">
    <property type="entry name" value="S4"/>
    <property type="match status" value="1"/>
</dbReference>
<accession>O84065</accession>
<name>SYY_CHLTR</name>
<reference key="1">
    <citation type="journal article" date="1998" name="Science">
        <title>Genome sequence of an obligate intracellular pathogen of humans: Chlamydia trachomatis.</title>
        <authorList>
            <person name="Stephens R.S."/>
            <person name="Kalman S."/>
            <person name="Lammel C.J."/>
            <person name="Fan J."/>
            <person name="Marathe R."/>
            <person name="Aravind L."/>
            <person name="Mitchell W.P."/>
            <person name="Olinger L."/>
            <person name="Tatusov R.L."/>
            <person name="Zhao Q."/>
            <person name="Koonin E.V."/>
            <person name="Davis R.W."/>
        </authorList>
    </citation>
    <scope>NUCLEOTIDE SEQUENCE [LARGE SCALE GENOMIC DNA]</scope>
    <source>
        <strain>ATCC VR-885 / DSM 19411 / UW-3/Cx</strain>
    </source>
</reference>
<feature type="chain" id="PRO_0000055651" description="Tyrosine--tRNA ligase">
    <location>
        <begin position="1"/>
        <end position="412"/>
    </location>
</feature>
<feature type="domain" description="S4 RNA-binding" evidence="1">
    <location>
        <begin position="345"/>
        <end position="411"/>
    </location>
</feature>
<feature type="short sequence motif" description="'HIGH' region">
    <location>
        <begin position="36"/>
        <end position="45"/>
    </location>
</feature>
<feature type="short sequence motif" description="'KMSKS' region">
    <location>
        <begin position="222"/>
        <end position="226"/>
    </location>
</feature>
<feature type="binding site" evidence="1">
    <location>
        <position position="31"/>
    </location>
    <ligand>
        <name>L-tyrosine</name>
        <dbReference type="ChEBI" id="CHEBI:58315"/>
    </ligand>
</feature>
<feature type="binding site" evidence="1">
    <location>
        <position position="162"/>
    </location>
    <ligand>
        <name>L-tyrosine</name>
        <dbReference type="ChEBI" id="CHEBI:58315"/>
    </ligand>
</feature>
<feature type="binding site" evidence="1">
    <location>
        <position position="166"/>
    </location>
    <ligand>
        <name>L-tyrosine</name>
        <dbReference type="ChEBI" id="CHEBI:58315"/>
    </ligand>
</feature>
<feature type="binding site" evidence="1">
    <location>
        <position position="225"/>
    </location>
    <ligand>
        <name>ATP</name>
        <dbReference type="ChEBI" id="CHEBI:30616"/>
    </ligand>
</feature>
<organism>
    <name type="scientific">Chlamydia trachomatis serovar D (strain ATCC VR-885 / DSM 19411 / UW-3/Cx)</name>
    <dbReference type="NCBI Taxonomy" id="272561"/>
    <lineage>
        <taxon>Bacteria</taxon>
        <taxon>Pseudomonadati</taxon>
        <taxon>Chlamydiota</taxon>
        <taxon>Chlamydiia</taxon>
        <taxon>Chlamydiales</taxon>
        <taxon>Chlamydiaceae</taxon>
        <taxon>Chlamydia/Chlamydophila group</taxon>
        <taxon>Chlamydia</taxon>
    </lineage>
</organism>
<gene>
    <name evidence="1" type="primary">tyrS</name>
    <name type="ordered locus">CT_062</name>
</gene>
<sequence length="412" mass="45435">MQQLIDNLKKRGILDNSSAGLESLTVPVSAYLGFDPTAPSLHIGHWIGICFLRRLAAYGITPVALVGGATGMIGDPSGKSVERSLLDQAQVLDNSKKIAAALASYLPGIRIVNNADWLGSLSMVDFLRDVGKHFRLGSMLAKDVVKQRVYSEEGISYTEFSYLLLQSYDFAHLFKEHNVVLQCGGSDQWGNITSGIDYIRRRGLGQAYGLTYPLLTDSKGKKIGKTESGTIWLDPALTPPYELFQYFLRLPDQEISKVMRTLTLLDNEEIFALDERLTSDPQAVKKYIAEVIVKDVHGSEGLAQAQAATESFFASKGKSITEAELVALVESGVGVKVARADLIGKRWLDIVVELGFCSSRGQARRLIQQRGLYINQEPLADEQSILDGTQLCFDRYVLLSQGKRKKQVIDLN</sequence>
<proteinExistence type="inferred from homology"/>
<protein>
    <recommendedName>
        <fullName evidence="1">Tyrosine--tRNA ligase</fullName>
        <ecNumber evidence="1">6.1.1.1</ecNumber>
    </recommendedName>
    <alternativeName>
        <fullName evidence="1">Tyrosyl-tRNA synthetase</fullName>
        <shortName evidence="1">TyrRS</shortName>
    </alternativeName>
</protein>
<keyword id="KW-0030">Aminoacyl-tRNA synthetase</keyword>
<keyword id="KW-0067">ATP-binding</keyword>
<keyword id="KW-0963">Cytoplasm</keyword>
<keyword id="KW-0436">Ligase</keyword>
<keyword id="KW-0547">Nucleotide-binding</keyword>
<keyword id="KW-0648">Protein biosynthesis</keyword>
<keyword id="KW-1185">Reference proteome</keyword>
<keyword id="KW-0694">RNA-binding</keyword>
<evidence type="ECO:0000255" key="1">
    <source>
        <dbReference type="HAMAP-Rule" id="MF_02006"/>
    </source>
</evidence>